<feature type="chain" id="PRO_0000422007" description="Pentalenolactone F synthase">
    <location>
        <begin position="1"/>
        <end position="299"/>
    </location>
</feature>
<feature type="binding site" evidence="1">
    <location>
        <position position="105"/>
    </location>
    <ligand>
        <name>Fe cation</name>
        <dbReference type="ChEBI" id="CHEBI:24875"/>
        <note>catalytic</note>
    </ligand>
</feature>
<feature type="binding site" evidence="1">
    <location>
        <position position="107"/>
    </location>
    <ligand>
        <name>Fe cation</name>
        <dbReference type="ChEBI" id="CHEBI:24875"/>
        <note>catalytic</note>
    </ligand>
</feature>
<feature type="binding site" evidence="1">
    <location>
        <position position="133"/>
    </location>
    <ligand>
        <name>2-oxoglutarate</name>
        <dbReference type="ChEBI" id="CHEBI:16810"/>
    </ligand>
</feature>
<feature type="binding site" evidence="1">
    <location>
        <position position="251"/>
    </location>
    <ligand>
        <name>2-oxoglutarate</name>
        <dbReference type="ChEBI" id="CHEBI:16810"/>
    </ligand>
</feature>
<feature type="binding site" evidence="1">
    <location>
        <position position="266"/>
    </location>
    <ligand>
        <name>Fe cation</name>
        <dbReference type="ChEBI" id="CHEBI:24875"/>
        <note>catalytic</note>
    </ligand>
</feature>
<feature type="binding site" evidence="1">
    <location>
        <position position="277"/>
    </location>
    <ligand>
        <name>2-oxoglutarate</name>
        <dbReference type="ChEBI" id="CHEBI:16810"/>
    </ligand>
</feature>
<evidence type="ECO:0000250" key="1"/>
<evidence type="ECO:0000269" key="2">
    <source>
    </source>
</evidence>
<evidence type="ECO:0000305" key="3"/>
<keyword id="KW-0045">Antibiotic biosynthesis</keyword>
<keyword id="KW-0223">Dioxygenase</keyword>
<keyword id="KW-0408">Iron</keyword>
<keyword id="KW-0479">Metal-binding</keyword>
<keyword id="KW-0560">Oxidoreductase</keyword>
<keyword id="KW-0847">Vitamin C</keyword>
<protein>
    <recommendedName>
        <fullName>Pentalenolactone F synthase</fullName>
        <ecNumber>1.14.11.36</ecNumber>
    </recommendedName>
    <alternativeName>
        <fullName>Pentalenolactone biosynthesis protein D</fullName>
    </alternativeName>
</protein>
<comment type="function">
    <text evidence="2">Catalyzes the Fe(2+) and alpha-ketoglutarate-dependent oxidation of pentalenolactone D to pentalenolactone F in the biosynthesis of pentalenolactone antibiotic. Also able to catalyze the oxidation of pentalenolactone D to pentalenolactone E.</text>
</comment>
<comment type="catalytic activity">
    <reaction>
        <text>pentalenolactone D + 2 2-oxoglutarate + 2 O2 = pentalenolactone F + 2 succinate + 2 CO2 + H2O</text>
        <dbReference type="Rhea" id="RHEA:34579"/>
        <dbReference type="ChEBI" id="CHEBI:15377"/>
        <dbReference type="ChEBI" id="CHEBI:15379"/>
        <dbReference type="ChEBI" id="CHEBI:16526"/>
        <dbReference type="ChEBI" id="CHEBI:16810"/>
        <dbReference type="ChEBI" id="CHEBI:30031"/>
        <dbReference type="ChEBI" id="CHEBI:70787"/>
        <dbReference type="ChEBI" id="CHEBI:70789"/>
        <dbReference type="EC" id="1.14.11.36"/>
    </reaction>
</comment>
<comment type="cofactor">
    <cofactor evidence="1">
        <name>Fe(2+)</name>
        <dbReference type="ChEBI" id="CHEBI:29033"/>
    </cofactor>
    <text evidence="1">Binds 1 Fe(2+) ion per subunit.</text>
</comment>
<comment type="activity regulation">
    <text evidence="1">Activated by ascorbate.</text>
</comment>
<comment type="pathway">
    <text evidence="2">Antibiotic biosynthesis; pentalenolactone biosynthesis.</text>
</comment>
<comment type="disruption phenotype">
    <text evidence="2">Accumulation of pentalenolactone D and lack of production of pentalenolactone as well as the precursors pentalenolactones E and F.</text>
</comment>
<comment type="similarity">
    <text evidence="3">Belongs to the TfdA dioxygenase family.</text>
</comment>
<dbReference type="EC" id="1.14.11.36"/>
<dbReference type="EMBL" id="HQ292065">
    <property type="protein sequence ID" value="ADO85576.1"/>
    <property type="molecule type" value="Genomic_DNA"/>
</dbReference>
<dbReference type="SMR" id="E3VWI8"/>
<dbReference type="BRENDA" id="1.14.11.36">
    <property type="organism ID" value="5975"/>
</dbReference>
<dbReference type="UniPathway" id="UPA00974"/>
<dbReference type="GO" id="GO:0051213">
    <property type="term" value="F:dioxygenase activity"/>
    <property type="evidence" value="ECO:0007669"/>
    <property type="project" value="UniProtKB-KW"/>
</dbReference>
<dbReference type="GO" id="GO:0031418">
    <property type="term" value="F:L-ascorbic acid binding"/>
    <property type="evidence" value="ECO:0007669"/>
    <property type="project" value="UniProtKB-KW"/>
</dbReference>
<dbReference type="GO" id="GO:0046872">
    <property type="term" value="F:metal ion binding"/>
    <property type="evidence" value="ECO:0007669"/>
    <property type="project" value="UniProtKB-KW"/>
</dbReference>
<dbReference type="GO" id="GO:0017000">
    <property type="term" value="P:antibiotic biosynthetic process"/>
    <property type="evidence" value="ECO:0007669"/>
    <property type="project" value="UniProtKB-KW"/>
</dbReference>
<dbReference type="GO" id="GO:1901780">
    <property type="term" value="P:pentalenolactone biosynthetic process"/>
    <property type="evidence" value="ECO:0000314"/>
    <property type="project" value="UniProtKB"/>
</dbReference>
<dbReference type="FunFam" id="3.60.130.10:FF:000024">
    <property type="entry name" value="Pentalenolactone F synthase"/>
    <property type="match status" value="1"/>
</dbReference>
<dbReference type="Gene3D" id="3.60.130.10">
    <property type="entry name" value="Clavaminate synthase-like"/>
    <property type="match status" value="1"/>
</dbReference>
<dbReference type="InterPro" id="IPR054973">
    <property type="entry name" value="PentlctneF_syn"/>
</dbReference>
<dbReference type="InterPro" id="IPR042098">
    <property type="entry name" value="TauD-like_sf"/>
</dbReference>
<dbReference type="InterPro" id="IPR003819">
    <property type="entry name" value="TauD/TfdA-like"/>
</dbReference>
<dbReference type="InterPro" id="IPR051178">
    <property type="entry name" value="TfdA_dioxygenase"/>
</dbReference>
<dbReference type="NCBIfam" id="NF045815">
    <property type="entry name" value="Neo-PentlctneFsynPtlD"/>
    <property type="match status" value="1"/>
</dbReference>
<dbReference type="PANTHER" id="PTHR43779:SF3">
    <property type="entry name" value="(3R)-3-[(CARBOXYMETHYL)AMINO]FATTY ACID OXYGENASE_DECARBOXYLASE"/>
    <property type="match status" value="1"/>
</dbReference>
<dbReference type="PANTHER" id="PTHR43779">
    <property type="entry name" value="DIOXYGENASE RV0097-RELATED"/>
    <property type="match status" value="1"/>
</dbReference>
<dbReference type="Pfam" id="PF02668">
    <property type="entry name" value="TauD"/>
    <property type="match status" value="1"/>
</dbReference>
<dbReference type="SUPFAM" id="SSF51197">
    <property type="entry name" value="Clavaminate synthase-like"/>
    <property type="match status" value="1"/>
</dbReference>
<organism>
    <name type="scientific">Streptomyces arenae</name>
    <dbReference type="NCBI Taxonomy" id="29301"/>
    <lineage>
        <taxon>Bacteria</taxon>
        <taxon>Bacillati</taxon>
        <taxon>Actinomycetota</taxon>
        <taxon>Actinomycetes</taxon>
        <taxon>Kitasatosporales</taxon>
        <taxon>Streptomycetaceae</taxon>
        <taxon>Streptomyces</taxon>
    </lineage>
</organism>
<gene>
    <name type="primary">pntD</name>
</gene>
<reference key="1">
    <citation type="journal article" date="2011" name="J. Am. Chem. Soc.">
        <title>Genome mining in streptomyces. Discovery of an unprecedented P450-catalyzed oxidative rearrangement that is the final step in the biosynthesis of pentalenolactone.</title>
        <authorList>
            <person name="Zhu D."/>
            <person name="Seo M.J."/>
            <person name="Ikeda H."/>
            <person name="Cane D.E."/>
        </authorList>
    </citation>
    <scope>NUCLEOTIDE SEQUENCE [GENOMIC DNA]</scope>
    <source>
        <strain>Tu469</strain>
    </source>
</reference>
<reference key="2">
    <citation type="journal article" date="2011" name="Biochemistry">
        <title>Genome mining in Streptomyces. Elucidation of the role of Baeyer-Villiger monooxygenases and non-heme iron-dependent dehydrogenase/oxygenases in the final steps of the biosynthesis of pentalenolactone and neopentalenolactone.</title>
        <authorList>
            <person name="Seo M.J."/>
            <person name="Zhu D."/>
            <person name="Endo S."/>
            <person name="Ikeda H."/>
            <person name="Cane D.E."/>
        </authorList>
    </citation>
    <scope>FUNCTION</scope>
    <scope>PATHWAY</scope>
    <scope>DISRUPTION PHENOTYPE</scope>
    <source>
        <strain>Tu469</strain>
    </source>
</reference>
<name>PNTD_STRAE</name>
<proteinExistence type="inferred from homology"/>
<sequence length="299" mass="33460">MEVTPIPGAPLGAVVHGARVTGDMDKTHLEEIWSALDTYLVLVLRGHETPSYEEFLAFGRRFGHIPKTGLTSGAHPEHNEILIVSNLVEDGRKIGVGDAEWMGWHTDYSFRPRVSQVGFLEAVEVPYSGGGETLFTDMYALYESLSPEERRRLHSFRVRHALRTGYEETIEEELQREVTLGEGADRIQPEDGTSTVHPLIARNPRTGRRSVYISTLNTERIVDLAPDDSRELLDGLLAHAGKPQYTYAHTWQPGDLVVWDQLGTVHAKQAFDPAERRVMRQVVSIFDDPAGPWRAEAAA</sequence>
<accession>E3VWI8</accession>